<dbReference type="EMBL" id="CP000804">
    <property type="protein sequence ID" value="ABU59303.1"/>
    <property type="molecule type" value="Genomic_DNA"/>
</dbReference>
<dbReference type="RefSeq" id="WP_012121727.1">
    <property type="nucleotide sequence ID" value="NC_009767.1"/>
</dbReference>
<dbReference type="SMR" id="A7NP08"/>
<dbReference type="STRING" id="383372.Rcas_3251"/>
<dbReference type="KEGG" id="rca:Rcas_3251"/>
<dbReference type="eggNOG" id="COG1327">
    <property type="taxonomic scope" value="Bacteria"/>
</dbReference>
<dbReference type="HOGENOM" id="CLU_108412_0_0_0"/>
<dbReference type="OrthoDB" id="9807461at2"/>
<dbReference type="Proteomes" id="UP000000263">
    <property type="component" value="Chromosome"/>
</dbReference>
<dbReference type="GO" id="GO:0005524">
    <property type="term" value="F:ATP binding"/>
    <property type="evidence" value="ECO:0007669"/>
    <property type="project" value="UniProtKB-KW"/>
</dbReference>
<dbReference type="GO" id="GO:0003677">
    <property type="term" value="F:DNA binding"/>
    <property type="evidence" value="ECO:0007669"/>
    <property type="project" value="UniProtKB-KW"/>
</dbReference>
<dbReference type="GO" id="GO:0008270">
    <property type="term" value="F:zinc ion binding"/>
    <property type="evidence" value="ECO:0007669"/>
    <property type="project" value="UniProtKB-UniRule"/>
</dbReference>
<dbReference type="GO" id="GO:0045892">
    <property type="term" value="P:negative regulation of DNA-templated transcription"/>
    <property type="evidence" value="ECO:0007669"/>
    <property type="project" value="UniProtKB-UniRule"/>
</dbReference>
<dbReference type="HAMAP" id="MF_00440">
    <property type="entry name" value="NrdR"/>
    <property type="match status" value="1"/>
</dbReference>
<dbReference type="InterPro" id="IPR005144">
    <property type="entry name" value="ATP-cone_dom"/>
</dbReference>
<dbReference type="InterPro" id="IPR055173">
    <property type="entry name" value="NrdR-like_N"/>
</dbReference>
<dbReference type="InterPro" id="IPR003796">
    <property type="entry name" value="RNR_NrdR-like"/>
</dbReference>
<dbReference type="NCBIfam" id="TIGR00244">
    <property type="entry name" value="transcriptional regulator NrdR"/>
    <property type="match status" value="1"/>
</dbReference>
<dbReference type="PANTHER" id="PTHR30455">
    <property type="entry name" value="TRANSCRIPTIONAL REPRESSOR NRDR"/>
    <property type="match status" value="1"/>
</dbReference>
<dbReference type="PANTHER" id="PTHR30455:SF2">
    <property type="entry name" value="TRANSCRIPTIONAL REPRESSOR NRDR"/>
    <property type="match status" value="1"/>
</dbReference>
<dbReference type="Pfam" id="PF03477">
    <property type="entry name" value="ATP-cone"/>
    <property type="match status" value="1"/>
</dbReference>
<dbReference type="Pfam" id="PF22811">
    <property type="entry name" value="Zn_ribbon_NrdR"/>
    <property type="match status" value="1"/>
</dbReference>
<dbReference type="PROSITE" id="PS51161">
    <property type="entry name" value="ATP_CONE"/>
    <property type="match status" value="1"/>
</dbReference>
<evidence type="ECO:0000255" key="1">
    <source>
        <dbReference type="HAMAP-Rule" id="MF_00440"/>
    </source>
</evidence>
<name>NRDR_ROSCS</name>
<comment type="function">
    <text evidence="1">Negatively regulates transcription of bacterial ribonucleotide reductase nrd genes and operons by binding to NrdR-boxes.</text>
</comment>
<comment type="cofactor">
    <cofactor evidence="1">
        <name>Zn(2+)</name>
        <dbReference type="ChEBI" id="CHEBI:29105"/>
    </cofactor>
    <text evidence="1">Binds 1 zinc ion.</text>
</comment>
<comment type="similarity">
    <text evidence="1">Belongs to the NrdR family.</text>
</comment>
<organism>
    <name type="scientific">Roseiflexus castenholzii (strain DSM 13941 / HLO8)</name>
    <dbReference type="NCBI Taxonomy" id="383372"/>
    <lineage>
        <taxon>Bacteria</taxon>
        <taxon>Bacillati</taxon>
        <taxon>Chloroflexota</taxon>
        <taxon>Chloroflexia</taxon>
        <taxon>Chloroflexales</taxon>
        <taxon>Roseiflexineae</taxon>
        <taxon>Roseiflexaceae</taxon>
        <taxon>Roseiflexus</taxon>
    </lineage>
</organism>
<proteinExistence type="inferred from homology"/>
<reference key="1">
    <citation type="submission" date="2007-08" db="EMBL/GenBank/DDBJ databases">
        <title>Complete sequence of Roseiflexus castenholzii DSM 13941.</title>
        <authorList>
            <consortium name="US DOE Joint Genome Institute"/>
            <person name="Copeland A."/>
            <person name="Lucas S."/>
            <person name="Lapidus A."/>
            <person name="Barry K."/>
            <person name="Glavina del Rio T."/>
            <person name="Dalin E."/>
            <person name="Tice H."/>
            <person name="Pitluck S."/>
            <person name="Thompson L.S."/>
            <person name="Brettin T."/>
            <person name="Bruce D."/>
            <person name="Detter J.C."/>
            <person name="Han C."/>
            <person name="Tapia R."/>
            <person name="Schmutz J."/>
            <person name="Larimer F."/>
            <person name="Land M."/>
            <person name="Hauser L."/>
            <person name="Kyrpides N."/>
            <person name="Mikhailova N."/>
            <person name="Bryant D.A."/>
            <person name="Hanada S."/>
            <person name="Tsukatani Y."/>
            <person name="Richardson P."/>
        </authorList>
    </citation>
    <scope>NUCLEOTIDE SEQUENCE [LARGE SCALE GENOMIC DNA]</scope>
    <source>
        <strain>DSM 13941 / HLO8</strain>
    </source>
</reference>
<feature type="chain" id="PRO_1000080813" description="Transcriptional repressor NrdR">
    <location>
        <begin position="1"/>
        <end position="152"/>
    </location>
</feature>
<feature type="domain" description="ATP-cone" evidence="1">
    <location>
        <begin position="49"/>
        <end position="139"/>
    </location>
</feature>
<feature type="zinc finger region" evidence="1">
    <location>
        <begin position="3"/>
        <end position="34"/>
    </location>
</feature>
<gene>
    <name evidence="1" type="primary">nrdR</name>
    <name type="ordered locus">Rcas_3251</name>
</gene>
<keyword id="KW-0067">ATP-binding</keyword>
<keyword id="KW-0238">DNA-binding</keyword>
<keyword id="KW-0479">Metal-binding</keyword>
<keyword id="KW-0547">Nucleotide-binding</keyword>
<keyword id="KW-1185">Reference proteome</keyword>
<keyword id="KW-0678">Repressor</keyword>
<keyword id="KW-0804">Transcription</keyword>
<keyword id="KW-0805">Transcription regulation</keyword>
<keyword id="KW-0862">Zinc</keyword>
<keyword id="KW-0863">Zinc-finger</keyword>
<protein>
    <recommendedName>
        <fullName evidence="1">Transcriptional repressor NrdR</fullName>
    </recommendedName>
</protein>
<sequence>MRCPYCQHPDSDVIDTRKLHNGETIRRRRKCEACGRRFTTYERVETVSITVVKKNGEREPYEREKLMRGVRTACYRRPVPAQALESLANDIEAELMALDEPEVPSSLIGDMVMRRLRTIDDVAYIRFASVYRSFADIGKLREAVDELLEQGR</sequence>
<accession>A7NP08</accession>